<sequence>MARDKQRTKKKERKNIAAGVAHVNSSFNNTKILISDVQGNAIAWSSAGTMGFKGSRKSTPYAAQMAAEDAGKKAQEHGVKTLEVQVQGPGSGRESALRALAAVGFNITAIRDVTPIAHNGCRPPKRRRV</sequence>
<proteinExistence type="inferred from homology"/>
<accession>A8LM80</accession>
<organism>
    <name type="scientific">Dinoroseobacter shibae (strain DSM 16493 / NCIMB 14021 / DFL 12)</name>
    <dbReference type="NCBI Taxonomy" id="398580"/>
    <lineage>
        <taxon>Bacteria</taxon>
        <taxon>Pseudomonadati</taxon>
        <taxon>Pseudomonadota</taxon>
        <taxon>Alphaproteobacteria</taxon>
        <taxon>Rhodobacterales</taxon>
        <taxon>Roseobacteraceae</taxon>
        <taxon>Dinoroseobacter</taxon>
    </lineage>
</organism>
<name>RS11_DINSH</name>
<keyword id="KW-1185">Reference proteome</keyword>
<keyword id="KW-0687">Ribonucleoprotein</keyword>
<keyword id="KW-0689">Ribosomal protein</keyword>
<keyword id="KW-0694">RNA-binding</keyword>
<keyword id="KW-0699">rRNA-binding</keyword>
<protein>
    <recommendedName>
        <fullName evidence="1">Small ribosomal subunit protein uS11</fullName>
    </recommendedName>
    <alternativeName>
        <fullName evidence="2">30S ribosomal protein S11</fullName>
    </alternativeName>
</protein>
<comment type="function">
    <text evidence="1">Located on the platform of the 30S subunit, it bridges several disparate RNA helices of the 16S rRNA. Forms part of the Shine-Dalgarno cleft in the 70S ribosome.</text>
</comment>
<comment type="subunit">
    <text evidence="1">Part of the 30S ribosomal subunit. Interacts with proteins S7 and S18. Binds to IF-3.</text>
</comment>
<comment type="similarity">
    <text evidence="1">Belongs to the universal ribosomal protein uS11 family.</text>
</comment>
<evidence type="ECO:0000255" key="1">
    <source>
        <dbReference type="HAMAP-Rule" id="MF_01310"/>
    </source>
</evidence>
<evidence type="ECO:0000305" key="2"/>
<dbReference type="EMBL" id="CP000830">
    <property type="protein sequence ID" value="ABV92057.1"/>
    <property type="molecule type" value="Genomic_DNA"/>
</dbReference>
<dbReference type="RefSeq" id="WP_012176987.1">
    <property type="nucleotide sequence ID" value="NC_009952.1"/>
</dbReference>
<dbReference type="SMR" id="A8LM80"/>
<dbReference type="STRING" id="398580.Dshi_0308"/>
<dbReference type="KEGG" id="dsh:Dshi_0308"/>
<dbReference type="eggNOG" id="COG0100">
    <property type="taxonomic scope" value="Bacteria"/>
</dbReference>
<dbReference type="HOGENOM" id="CLU_072439_5_0_5"/>
<dbReference type="OrthoDB" id="9806415at2"/>
<dbReference type="Proteomes" id="UP000006833">
    <property type="component" value="Chromosome"/>
</dbReference>
<dbReference type="GO" id="GO:1990904">
    <property type="term" value="C:ribonucleoprotein complex"/>
    <property type="evidence" value="ECO:0007669"/>
    <property type="project" value="UniProtKB-KW"/>
</dbReference>
<dbReference type="GO" id="GO:0005840">
    <property type="term" value="C:ribosome"/>
    <property type="evidence" value="ECO:0007669"/>
    <property type="project" value="UniProtKB-KW"/>
</dbReference>
<dbReference type="GO" id="GO:0019843">
    <property type="term" value="F:rRNA binding"/>
    <property type="evidence" value="ECO:0007669"/>
    <property type="project" value="UniProtKB-UniRule"/>
</dbReference>
<dbReference type="GO" id="GO:0003735">
    <property type="term" value="F:structural constituent of ribosome"/>
    <property type="evidence" value="ECO:0007669"/>
    <property type="project" value="InterPro"/>
</dbReference>
<dbReference type="GO" id="GO:0006412">
    <property type="term" value="P:translation"/>
    <property type="evidence" value="ECO:0007669"/>
    <property type="project" value="UniProtKB-UniRule"/>
</dbReference>
<dbReference type="FunFam" id="3.30.420.80:FF:000001">
    <property type="entry name" value="30S ribosomal protein S11"/>
    <property type="match status" value="1"/>
</dbReference>
<dbReference type="Gene3D" id="3.30.420.80">
    <property type="entry name" value="Ribosomal protein S11"/>
    <property type="match status" value="1"/>
</dbReference>
<dbReference type="HAMAP" id="MF_01310">
    <property type="entry name" value="Ribosomal_uS11"/>
    <property type="match status" value="1"/>
</dbReference>
<dbReference type="InterPro" id="IPR001971">
    <property type="entry name" value="Ribosomal_uS11"/>
</dbReference>
<dbReference type="InterPro" id="IPR019981">
    <property type="entry name" value="Ribosomal_uS11_bac-type"/>
</dbReference>
<dbReference type="InterPro" id="IPR018102">
    <property type="entry name" value="Ribosomal_uS11_CS"/>
</dbReference>
<dbReference type="InterPro" id="IPR036967">
    <property type="entry name" value="Ribosomal_uS11_sf"/>
</dbReference>
<dbReference type="NCBIfam" id="NF003698">
    <property type="entry name" value="PRK05309.1"/>
    <property type="match status" value="1"/>
</dbReference>
<dbReference type="NCBIfam" id="TIGR03632">
    <property type="entry name" value="uS11_bact"/>
    <property type="match status" value="1"/>
</dbReference>
<dbReference type="PANTHER" id="PTHR11759">
    <property type="entry name" value="40S RIBOSOMAL PROTEIN S14/30S RIBOSOMAL PROTEIN S11"/>
    <property type="match status" value="1"/>
</dbReference>
<dbReference type="Pfam" id="PF00411">
    <property type="entry name" value="Ribosomal_S11"/>
    <property type="match status" value="1"/>
</dbReference>
<dbReference type="PIRSF" id="PIRSF002131">
    <property type="entry name" value="Ribosomal_S11"/>
    <property type="match status" value="1"/>
</dbReference>
<dbReference type="SUPFAM" id="SSF53137">
    <property type="entry name" value="Translational machinery components"/>
    <property type="match status" value="1"/>
</dbReference>
<dbReference type="PROSITE" id="PS00054">
    <property type="entry name" value="RIBOSOMAL_S11"/>
    <property type="match status" value="1"/>
</dbReference>
<feature type="chain" id="PRO_1000086188" description="Small ribosomal subunit protein uS11">
    <location>
        <begin position="1"/>
        <end position="129"/>
    </location>
</feature>
<gene>
    <name evidence="1" type="primary">rpsK</name>
    <name type="ordered locus">Dshi_0308</name>
</gene>
<reference key="1">
    <citation type="journal article" date="2010" name="ISME J.">
        <title>The complete genome sequence of the algal symbiont Dinoroseobacter shibae: a hitchhiker's guide to life in the sea.</title>
        <authorList>
            <person name="Wagner-Dobler I."/>
            <person name="Ballhausen B."/>
            <person name="Berger M."/>
            <person name="Brinkhoff T."/>
            <person name="Buchholz I."/>
            <person name="Bunk B."/>
            <person name="Cypionka H."/>
            <person name="Daniel R."/>
            <person name="Drepper T."/>
            <person name="Gerdts G."/>
            <person name="Hahnke S."/>
            <person name="Han C."/>
            <person name="Jahn D."/>
            <person name="Kalhoefer D."/>
            <person name="Kiss H."/>
            <person name="Klenk H.P."/>
            <person name="Kyrpides N."/>
            <person name="Liebl W."/>
            <person name="Liesegang H."/>
            <person name="Meincke L."/>
            <person name="Pati A."/>
            <person name="Petersen J."/>
            <person name="Piekarski T."/>
            <person name="Pommerenke C."/>
            <person name="Pradella S."/>
            <person name="Pukall R."/>
            <person name="Rabus R."/>
            <person name="Stackebrandt E."/>
            <person name="Thole S."/>
            <person name="Thompson L."/>
            <person name="Tielen P."/>
            <person name="Tomasch J."/>
            <person name="von Jan M."/>
            <person name="Wanphrut N."/>
            <person name="Wichels A."/>
            <person name="Zech H."/>
            <person name="Simon M."/>
        </authorList>
    </citation>
    <scope>NUCLEOTIDE SEQUENCE [LARGE SCALE GENOMIC DNA]</scope>
    <source>
        <strain>DSM 16493 / NCIMB 14021 / DFL 12</strain>
    </source>
</reference>